<dbReference type="EC" id="2.7.7.65" evidence="6"/>
<dbReference type="EMBL" id="AE004091">
    <property type="protein sequence ID" value="AAG08872.1"/>
    <property type="molecule type" value="Genomic_DNA"/>
</dbReference>
<dbReference type="PIR" id="F82960">
    <property type="entry name" value="F82960"/>
</dbReference>
<dbReference type="RefSeq" id="NP_254174.1">
    <property type="nucleotide sequence ID" value="NC_002516.2"/>
</dbReference>
<dbReference type="RefSeq" id="WP_003114121.1">
    <property type="nucleotide sequence ID" value="NZ_QZGE01000012.1"/>
</dbReference>
<dbReference type="SMR" id="Q9HT84"/>
<dbReference type="STRING" id="208964.PA5487"/>
<dbReference type="PaxDb" id="208964-PA5487"/>
<dbReference type="GeneID" id="877705"/>
<dbReference type="KEGG" id="pae:PA5487"/>
<dbReference type="PATRIC" id="fig|208964.12.peg.5752"/>
<dbReference type="PseudoCAP" id="PA5487"/>
<dbReference type="HOGENOM" id="CLU_025058_0_0_6"/>
<dbReference type="InParanoid" id="Q9HT84"/>
<dbReference type="OrthoDB" id="9812260at2"/>
<dbReference type="PhylomeDB" id="Q9HT84"/>
<dbReference type="BioCyc" id="PAER208964:G1FZ6-5614-MONOMER"/>
<dbReference type="BRENDA" id="2.7.7.65">
    <property type="organism ID" value="5087"/>
</dbReference>
<dbReference type="UniPathway" id="UPA00599"/>
<dbReference type="Proteomes" id="UP000002438">
    <property type="component" value="Chromosome"/>
</dbReference>
<dbReference type="GO" id="GO:0005886">
    <property type="term" value="C:plasma membrane"/>
    <property type="evidence" value="ECO:0000318"/>
    <property type="project" value="GO_Central"/>
</dbReference>
<dbReference type="GO" id="GO:0052621">
    <property type="term" value="F:diguanylate cyclase activity"/>
    <property type="evidence" value="ECO:0000314"/>
    <property type="project" value="PseudoCAP"/>
</dbReference>
<dbReference type="GO" id="GO:0005525">
    <property type="term" value="F:GTP binding"/>
    <property type="evidence" value="ECO:0007669"/>
    <property type="project" value="UniProtKB-KW"/>
</dbReference>
<dbReference type="GO" id="GO:0046872">
    <property type="term" value="F:metal ion binding"/>
    <property type="evidence" value="ECO:0007669"/>
    <property type="project" value="UniProtKB-KW"/>
</dbReference>
<dbReference type="GO" id="GO:0043709">
    <property type="term" value="P:cell adhesion involved in single-species biofilm formation"/>
    <property type="evidence" value="ECO:0000318"/>
    <property type="project" value="GO_Central"/>
</dbReference>
<dbReference type="GO" id="GO:1902201">
    <property type="term" value="P:negative regulation of bacterial-type flagellum-dependent cell motility"/>
    <property type="evidence" value="ECO:0000318"/>
    <property type="project" value="GO_Central"/>
</dbReference>
<dbReference type="CDD" id="cd01949">
    <property type="entry name" value="GGDEF"/>
    <property type="match status" value="1"/>
</dbReference>
<dbReference type="FunFam" id="3.30.70.270:FF:000001">
    <property type="entry name" value="Diguanylate cyclase domain protein"/>
    <property type="match status" value="1"/>
</dbReference>
<dbReference type="Gene3D" id="3.30.70.270">
    <property type="match status" value="1"/>
</dbReference>
<dbReference type="InterPro" id="IPR048516">
    <property type="entry name" value="DGCcoil"/>
</dbReference>
<dbReference type="InterPro" id="IPR050469">
    <property type="entry name" value="Diguanylate_Cyclase"/>
</dbReference>
<dbReference type="InterPro" id="IPR000160">
    <property type="entry name" value="GGDEF_dom"/>
</dbReference>
<dbReference type="InterPro" id="IPR029787">
    <property type="entry name" value="Nucleotide_cyclase"/>
</dbReference>
<dbReference type="InterPro" id="IPR043128">
    <property type="entry name" value="Rev_trsase/Diguanyl_cyclase"/>
</dbReference>
<dbReference type="NCBIfam" id="TIGR00254">
    <property type="entry name" value="GGDEF"/>
    <property type="match status" value="1"/>
</dbReference>
<dbReference type="PANTHER" id="PTHR45138:SF9">
    <property type="entry name" value="DIGUANYLATE CYCLASE DGCM-RELATED"/>
    <property type="match status" value="1"/>
</dbReference>
<dbReference type="PANTHER" id="PTHR45138">
    <property type="entry name" value="REGULATORY COMPONENTS OF SENSORY TRANSDUCTION SYSTEM"/>
    <property type="match status" value="1"/>
</dbReference>
<dbReference type="Pfam" id="PF20975">
    <property type="entry name" value="DGCcoil"/>
    <property type="match status" value="1"/>
</dbReference>
<dbReference type="Pfam" id="PF00990">
    <property type="entry name" value="GGDEF"/>
    <property type="match status" value="1"/>
</dbReference>
<dbReference type="SMART" id="SM00267">
    <property type="entry name" value="GGDEF"/>
    <property type="match status" value="1"/>
</dbReference>
<dbReference type="SUPFAM" id="SSF55073">
    <property type="entry name" value="Nucleotide cyclase"/>
    <property type="match status" value="1"/>
</dbReference>
<dbReference type="PROSITE" id="PS50887">
    <property type="entry name" value="GGDEF"/>
    <property type="match status" value="1"/>
</dbReference>
<sequence>MSRDDVQRWKDKYLENIEQQERLQRRWDARIDLLRRGLVRSSLAAEGSDKAVDQCMKELREILRRDDMDAGLSGLIPRLEKAVLDSEQRRQQRTQQNIDALGELAQQLLALDLPRELRKPLKQFARDIEERARQSREIPILLSELSRLQRQALAERKGGDAEDGRPSLLQRLFGGKESETTAEPSASVPSVVAASNTPIQPAAAAPSLPVAEHDEAPGGPPQPLPARTVAAIESAPAGWVGVAERGEPNQILLDEPREIWLDSLPLPAGLSFSETLEEAGAEPSPAMPADVESAPEAPATPVDNLDGQAVDEAYELPPPIPEPGYSAVAPHIEASLLRLLDGLSLPSSHQPQAEALRERIDGSLNWYELVPVLDDLAVLVLSLADSGQRDFEEYLRQLNERLESFLGHLGDAHAGYTDVLDNARGFDQSLREQVSGLQASVQQATDLNSLKLAVDSRLNGLLASMDEHQREQAEHEQEVSGRLQALMERVNSMEQDAKAFHSHLEDQRQKALTDPLTGLPNRAALSERLEQEVARRHRDGGDLLLAVLDIDHFKRINDDFGHLAGDKVLKIIAGELRKRLRQADFIARFGGEEFVVLLPATSLEAGRQLLERLRAAIAACPFHFKGEPLSITCSAGITAFEGNEAGEAVFERADQALYRAKRAGRDRLEVA</sequence>
<proteinExistence type="evidence at protein level"/>
<gene>
    <name type="primary">dgcP</name>
    <name type="ordered locus">PA5487</name>
</gene>
<comment type="function">
    <text evidence="1 5 6">Catalyzes the synthesis of cyclic-di-GMP (c-di-GMP) via the condensation of 2 GTP molecules (PubMed:25809128). Cyclic-di-GMP is a second messenger which controls cell surface-associated traits in bacteria (PubMed:25118352). Localizes at the cell poles through interaction with FimV where it increases the local pools of c-di-GMP (By similarity).</text>
</comment>
<comment type="catalytic activity">
    <reaction evidence="6">
        <text>2 GTP = 3',3'-c-di-GMP + 2 diphosphate</text>
        <dbReference type="Rhea" id="RHEA:24898"/>
        <dbReference type="ChEBI" id="CHEBI:33019"/>
        <dbReference type="ChEBI" id="CHEBI:37565"/>
        <dbReference type="ChEBI" id="CHEBI:58805"/>
        <dbReference type="EC" id="2.7.7.65"/>
    </reaction>
</comment>
<comment type="cofactor">
    <cofactor evidence="2">
        <name>Mg(2+)</name>
        <dbReference type="ChEBI" id="CHEBI:18420"/>
    </cofactor>
    <text evidence="2">Binds 1 Mg(2+) ion per monomer.</text>
</comment>
<comment type="pathway">
    <text evidence="2">Purine metabolism; 3',5'-cyclic di-GMP biosynthesis.</text>
</comment>
<comment type="subunit">
    <text evidence="2">Homodimer.</text>
</comment>
<comment type="subcellular location">
    <subcellularLocation>
        <location evidence="1">Cell inner membrane</location>
    </subcellularLocation>
    <text evidence="1">Localizes at the cell poles in a FimV-dependent manner.</text>
</comment>
<comment type="domain">
    <text evidence="6">The GGEEF domain is required for function.</text>
</comment>
<comment type="disruption phenotype">
    <text evidence="6">Deletion mutant leads to a reduction in virulence that is reflected by decreased bacterial dissemination, enhanced bacterial clearance and reduced host lung injury. It also results in increased swimming motility of approximately 1.5-fold increase, and a 2-fold decrease in biofilm formation.</text>
</comment>
<keyword id="KW-0997">Cell inner membrane</keyword>
<keyword id="KW-1003">Cell membrane</keyword>
<keyword id="KW-0342">GTP-binding</keyword>
<keyword id="KW-0460">Magnesium</keyword>
<keyword id="KW-0472">Membrane</keyword>
<keyword id="KW-0479">Metal-binding</keyword>
<keyword id="KW-0547">Nucleotide-binding</keyword>
<keyword id="KW-1185">Reference proteome</keyword>
<keyword id="KW-0808">Transferase</keyword>
<reference key="1">
    <citation type="journal article" date="2000" name="Nature">
        <title>Complete genome sequence of Pseudomonas aeruginosa PAO1, an opportunistic pathogen.</title>
        <authorList>
            <person name="Stover C.K."/>
            <person name="Pham X.-Q.T."/>
            <person name="Erwin A.L."/>
            <person name="Mizoguchi S.D."/>
            <person name="Warrener P."/>
            <person name="Hickey M.J."/>
            <person name="Brinkman F.S.L."/>
            <person name="Hufnagle W.O."/>
            <person name="Kowalik D.J."/>
            <person name="Lagrou M."/>
            <person name="Garber R.L."/>
            <person name="Goltry L."/>
            <person name="Tolentino E."/>
            <person name="Westbrock-Wadman S."/>
            <person name="Yuan Y."/>
            <person name="Brody L.L."/>
            <person name="Coulter S.N."/>
            <person name="Folger K.R."/>
            <person name="Kas A."/>
            <person name="Larbig K."/>
            <person name="Lim R.M."/>
            <person name="Smith K.A."/>
            <person name="Spencer D.H."/>
            <person name="Wong G.K.-S."/>
            <person name="Wu Z."/>
            <person name="Paulsen I.T."/>
            <person name="Reizer J."/>
            <person name="Saier M.H. Jr."/>
            <person name="Hancock R.E.W."/>
            <person name="Lory S."/>
            <person name="Olson M.V."/>
        </authorList>
    </citation>
    <scope>NUCLEOTIDE SEQUENCE [LARGE SCALE GENOMIC DNA]</scope>
    <source>
        <strain>ATCC 15692 / DSM 22644 / CIP 104116 / JCM 14847 / LMG 12228 / 1C / PRS 101 / PAO1</strain>
    </source>
</reference>
<reference key="2">
    <citation type="journal article" date="2014" name="Environ. Microbiol.">
        <title>Cyclic-di-GMP levels affect Pseudomonas aeruginosa fitness in the presence of imipenem.</title>
        <authorList>
            <person name="Nicastro G.G."/>
            <person name="Kaihami G.H."/>
            <person name="Pereira T.O."/>
            <person name="Meireles D.A."/>
            <person name="Groleau M.C."/>
            <person name="Deziel E."/>
            <person name="Baldini R.L."/>
        </authorList>
    </citation>
    <scope>FUNCTION</scope>
    <scope>DOMAIN</scope>
    <scope>DISRUPTION PHENOTYPE</scope>
    <source>
        <strain>PAK</strain>
    </source>
</reference>
<reference key="3">
    <citation type="journal article" date="2015" name="Environ. Microbiol.">
        <title>Diguanylate cyclase DgcP is involved in plant and human Pseudomonas spp. infections.</title>
        <authorList>
            <person name="Aragon I.M."/>
            <person name="Perez-Mendoza D."/>
            <person name="Moscoso J.A."/>
            <person name="Faure E."/>
            <person name="Guery B."/>
            <person name="Gallegos M.T."/>
            <person name="Filloux A."/>
            <person name="Ramos C."/>
        </authorList>
    </citation>
    <scope>FUNCTION AS A DIGUANYLATE CYCLASE</scope>
    <scope>CATALYTIC ACTIVITY</scope>
    <scope>DISRUPTION PHENOTYPE</scope>
    <scope>DOMAIN</scope>
    <source>
        <strain>PAK</strain>
    </source>
</reference>
<feature type="chain" id="PRO_0000450451" description="Diguanylate cyclase DgcP">
    <location>
        <begin position="1"/>
        <end position="671"/>
    </location>
</feature>
<feature type="region of interest" description="Disordered" evidence="4">
    <location>
        <begin position="204"/>
        <end position="223"/>
    </location>
</feature>
<feature type="region of interest" description="Disordered" evidence="4">
    <location>
        <begin position="278"/>
        <end position="298"/>
    </location>
</feature>
<feature type="active site" evidence="2">
    <location>
        <position position="592"/>
    </location>
</feature>
<feature type="binding site" evidence="2">
    <location>
        <position position="549"/>
    </location>
    <ligand>
        <name>Mg(2+)</name>
        <dbReference type="ChEBI" id="CHEBI:18420"/>
    </ligand>
</feature>
<feature type="binding site" evidence="2">
    <location>
        <position position="557"/>
    </location>
    <ligand>
        <name>substrate</name>
    </ligand>
</feature>
<feature type="binding site" evidence="2">
    <location>
        <position position="562"/>
    </location>
    <ligand>
        <name>substrate</name>
    </ligand>
</feature>
<feature type="binding site" evidence="2">
    <location>
        <position position="566"/>
    </location>
    <ligand>
        <name>substrate</name>
    </ligand>
</feature>
<feature type="binding site" evidence="2">
    <location>
        <position position="592"/>
    </location>
    <ligand>
        <name>Mg(2+)</name>
        <dbReference type="ChEBI" id="CHEBI:18420"/>
    </ligand>
</feature>
<feature type="site" description="Transition state stabilizer" evidence="3">
    <location>
        <position position="554"/>
    </location>
</feature>
<evidence type="ECO:0000250" key="1">
    <source>
        <dbReference type="UniProtKB" id="A0A0H2ZJS2"/>
    </source>
</evidence>
<evidence type="ECO:0000250" key="2">
    <source>
        <dbReference type="UniProtKB" id="P31129"/>
    </source>
</evidence>
<evidence type="ECO:0000255" key="3"/>
<evidence type="ECO:0000256" key="4">
    <source>
        <dbReference type="SAM" id="MobiDB-lite"/>
    </source>
</evidence>
<evidence type="ECO:0000269" key="5">
    <source>
    </source>
</evidence>
<evidence type="ECO:0000269" key="6">
    <source>
    </source>
</evidence>
<evidence type="ECO:0000303" key="7">
    <source>
    </source>
</evidence>
<organism>
    <name type="scientific">Pseudomonas aeruginosa (strain ATCC 15692 / DSM 22644 / CIP 104116 / JCM 14847 / LMG 12228 / 1C / PRS 101 / PAO1)</name>
    <dbReference type="NCBI Taxonomy" id="208964"/>
    <lineage>
        <taxon>Bacteria</taxon>
        <taxon>Pseudomonadati</taxon>
        <taxon>Pseudomonadota</taxon>
        <taxon>Gammaproteobacteria</taxon>
        <taxon>Pseudomonadales</taxon>
        <taxon>Pseudomonadaceae</taxon>
        <taxon>Pseudomonas</taxon>
    </lineage>
</organism>
<accession>Q9HT84</accession>
<protein>
    <recommendedName>
        <fullName evidence="7">Diguanylate cyclase DgcP</fullName>
        <ecNumber evidence="6">2.7.7.65</ecNumber>
    </recommendedName>
</protein>
<name>DGCP_PSEAE</name>